<proteinExistence type="inferred from homology"/>
<accession>Q5NXR0</accession>
<evidence type="ECO:0000255" key="1">
    <source>
        <dbReference type="HAMAP-Rule" id="MF_00741"/>
    </source>
</evidence>
<name>PUR5_AROAE</name>
<gene>
    <name evidence="1" type="primary">purM</name>
    <name type="ordered locus">AZOSEA40290</name>
    <name type="ORF">ebA7104</name>
</gene>
<organism>
    <name type="scientific">Aromatoleum aromaticum (strain DSM 19018 / LMG 30748 / EbN1)</name>
    <name type="common">Azoarcus sp. (strain EbN1)</name>
    <dbReference type="NCBI Taxonomy" id="76114"/>
    <lineage>
        <taxon>Bacteria</taxon>
        <taxon>Pseudomonadati</taxon>
        <taxon>Pseudomonadota</taxon>
        <taxon>Betaproteobacteria</taxon>
        <taxon>Rhodocyclales</taxon>
        <taxon>Rhodocyclaceae</taxon>
        <taxon>Aromatoleum</taxon>
    </lineage>
</organism>
<protein>
    <recommendedName>
        <fullName evidence="1">Phosphoribosylformylglycinamidine cyclo-ligase</fullName>
        <ecNumber evidence="1">6.3.3.1</ecNumber>
    </recommendedName>
    <alternativeName>
        <fullName evidence="1">AIR synthase</fullName>
    </alternativeName>
    <alternativeName>
        <fullName evidence="1">AIRS</fullName>
    </alternativeName>
    <alternativeName>
        <fullName evidence="1">Phosphoribosyl-aminoimidazole synthetase</fullName>
    </alternativeName>
</protein>
<feature type="chain" id="PRO_0000258327" description="Phosphoribosylformylglycinamidine cyclo-ligase">
    <location>
        <begin position="1"/>
        <end position="348"/>
    </location>
</feature>
<comment type="catalytic activity">
    <reaction evidence="1">
        <text>2-formamido-N(1)-(5-O-phospho-beta-D-ribosyl)acetamidine + ATP = 5-amino-1-(5-phospho-beta-D-ribosyl)imidazole + ADP + phosphate + H(+)</text>
        <dbReference type="Rhea" id="RHEA:23032"/>
        <dbReference type="ChEBI" id="CHEBI:15378"/>
        <dbReference type="ChEBI" id="CHEBI:30616"/>
        <dbReference type="ChEBI" id="CHEBI:43474"/>
        <dbReference type="ChEBI" id="CHEBI:137981"/>
        <dbReference type="ChEBI" id="CHEBI:147287"/>
        <dbReference type="ChEBI" id="CHEBI:456216"/>
        <dbReference type="EC" id="6.3.3.1"/>
    </reaction>
</comment>
<comment type="pathway">
    <text evidence="1">Purine metabolism; IMP biosynthesis via de novo pathway; 5-amino-1-(5-phospho-D-ribosyl)imidazole from N(2)-formyl-N(1)-(5-phospho-D-ribosyl)glycinamide: step 2/2.</text>
</comment>
<comment type="subcellular location">
    <subcellularLocation>
        <location evidence="1">Cytoplasm</location>
    </subcellularLocation>
</comment>
<comment type="similarity">
    <text evidence="1">Belongs to the AIR synthase family.</text>
</comment>
<dbReference type="EC" id="6.3.3.1" evidence="1"/>
<dbReference type="EMBL" id="CR555306">
    <property type="protein sequence ID" value="CAI10154.1"/>
    <property type="molecule type" value="Genomic_DNA"/>
</dbReference>
<dbReference type="RefSeq" id="WP_011239799.1">
    <property type="nucleotide sequence ID" value="NC_006513.1"/>
</dbReference>
<dbReference type="SMR" id="Q5NXR0"/>
<dbReference type="STRING" id="76114.ebA7104"/>
<dbReference type="KEGG" id="eba:ebA7104"/>
<dbReference type="eggNOG" id="COG0150">
    <property type="taxonomic scope" value="Bacteria"/>
</dbReference>
<dbReference type="HOGENOM" id="CLU_047116_0_0_4"/>
<dbReference type="OrthoDB" id="9777881at2"/>
<dbReference type="UniPathway" id="UPA00074">
    <property type="reaction ID" value="UER00129"/>
</dbReference>
<dbReference type="Proteomes" id="UP000006552">
    <property type="component" value="Chromosome"/>
</dbReference>
<dbReference type="GO" id="GO:0005829">
    <property type="term" value="C:cytosol"/>
    <property type="evidence" value="ECO:0007669"/>
    <property type="project" value="TreeGrafter"/>
</dbReference>
<dbReference type="GO" id="GO:0005524">
    <property type="term" value="F:ATP binding"/>
    <property type="evidence" value="ECO:0007669"/>
    <property type="project" value="UniProtKB-KW"/>
</dbReference>
<dbReference type="GO" id="GO:0004637">
    <property type="term" value="F:phosphoribosylamine-glycine ligase activity"/>
    <property type="evidence" value="ECO:0007669"/>
    <property type="project" value="TreeGrafter"/>
</dbReference>
<dbReference type="GO" id="GO:0004641">
    <property type="term" value="F:phosphoribosylformylglycinamidine cyclo-ligase activity"/>
    <property type="evidence" value="ECO:0007669"/>
    <property type="project" value="UniProtKB-UniRule"/>
</dbReference>
<dbReference type="GO" id="GO:0006189">
    <property type="term" value="P:'de novo' IMP biosynthetic process"/>
    <property type="evidence" value="ECO:0007669"/>
    <property type="project" value="UniProtKB-UniRule"/>
</dbReference>
<dbReference type="GO" id="GO:0046084">
    <property type="term" value="P:adenine biosynthetic process"/>
    <property type="evidence" value="ECO:0007669"/>
    <property type="project" value="TreeGrafter"/>
</dbReference>
<dbReference type="CDD" id="cd02196">
    <property type="entry name" value="PurM"/>
    <property type="match status" value="1"/>
</dbReference>
<dbReference type="FunFam" id="3.30.1330.10:FF:000001">
    <property type="entry name" value="Phosphoribosylformylglycinamidine cyclo-ligase"/>
    <property type="match status" value="1"/>
</dbReference>
<dbReference type="FunFam" id="3.90.650.10:FF:000001">
    <property type="entry name" value="Phosphoribosylformylglycinamidine cyclo-ligase"/>
    <property type="match status" value="1"/>
</dbReference>
<dbReference type="Gene3D" id="3.90.650.10">
    <property type="entry name" value="PurM-like C-terminal domain"/>
    <property type="match status" value="1"/>
</dbReference>
<dbReference type="Gene3D" id="3.30.1330.10">
    <property type="entry name" value="PurM-like, N-terminal domain"/>
    <property type="match status" value="1"/>
</dbReference>
<dbReference type="HAMAP" id="MF_00741">
    <property type="entry name" value="AIRS"/>
    <property type="match status" value="1"/>
</dbReference>
<dbReference type="InterPro" id="IPR010918">
    <property type="entry name" value="PurM-like_C_dom"/>
</dbReference>
<dbReference type="InterPro" id="IPR036676">
    <property type="entry name" value="PurM-like_C_sf"/>
</dbReference>
<dbReference type="InterPro" id="IPR016188">
    <property type="entry name" value="PurM-like_N"/>
</dbReference>
<dbReference type="InterPro" id="IPR036921">
    <property type="entry name" value="PurM-like_N_sf"/>
</dbReference>
<dbReference type="InterPro" id="IPR004733">
    <property type="entry name" value="PurM_cligase"/>
</dbReference>
<dbReference type="NCBIfam" id="TIGR00878">
    <property type="entry name" value="purM"/>
    <property type="match status" value="1"/>
</dbReference>
<dbReference type="PANTHER" id="PTHR10520:SF12">
    <property type="entry name" value="TRIFUNCTIONAL PURINE BIOSYNTHETIC PROTEIN ADENOSINE-3"/>
    <property type="match status" value="1"/>
</dbReference>
<dbReference type="PANTHER" id="PTHR10520">
    <property type="entry name" value="TRIFUNCTIONAL PURINE BIOSYNTHETIC PROTEIN ADENOSINE-3-RELATED"/>
    <property type="match status" value="1"/>
</dbReference>
<dbReference type="Pfam" id="PF00586">
    <property type="entry name" value="AIRS"/>
    <property type="match status" value="1"/>
</dbReference>
<dbReference type="Pfam" id="PF02769">
    <property type="entry name" value="AIRS_C"/>
    <property type="match status" value="1"/>
</dbReference>
<dbReference type="SUPFAM" id="SSF56042">
    <property type="entry name" value="PurM C-terminal domain-like"/>
    <property type="match status" value="1"/>
</dbReference>
<dbReference type="SUPFAM" id="SSF55326">
    <property type="entry name" value="PurM N-terminal domain-like"/>
    <property type="match status" value="1"/>
</dbReference>
<reference key="1">
    <citation type="journal article" date="2005" name="Arch. Microbiol.">
        <title>The genome sequence of an anaerobic aromatic-degrading denitrifying bacterium, strain EbN1.</title>
        <authorList>
            <person name="Rabus R."/>
            <person name="Kube M."/>
            <person name="Heider J."/>
            <person name="Beck A."/>
            <person name="Heitmann K."/>
            <person name="Widdel F."/>
            <person name="Reinhardt R."/>
        </authorList>
    </citation>
    <scope>NUCLEOTIDE SEQUENCE [LARGE SCALE GENOMIC DNA]</scope>
    <source>
        <strain>DSM 19018 / LMG 30748 / EbN1</strain>
    </source>
</reference>
<keyword id="KW-0067">ATP-binding</keyword>
<keyword id="KW-0963">Cytoplasm</keyword>
<keyword id="KW-0436">Ligase</keyword>
<keyword id="KW-0547">Nucleotide-binding</keyword>
<keyword id="KW-0658">Purine biosynthesis</keyword>
<keyword id="KW-1185">Reference proteome</keyword>
<sequence>MSSPKPSLSYRDAGVDIDAGDALVDRIKPLAKRTMRPEVLGGIGGFGALFELSKKYREPVLVSGTDGVGTKLKLAFQLNRHDTVGQDLVAMSVNDILVQGAEPLFFLDYFACGKLDVDTAAAVVSGIARGCELSGCALIGGETAEMHGMYPDGEYDLAGFAVGAVEKSEIIDGSRIVPGDVVLGLASSGAHSNGYSLIRKIIDLAKPDLDADFHGRPLRDVILEPTRLYVKPMLGLMQAIPGVVKGMAHITGGGLLENVPRILADGLAARLDVSSWTLPPLFQWLRDAGNVDAQEMYRVFNCGVGMVVIVSAAQAGAAVQNLEAAGEIVYRLGRIESRAEGAAQTTVG</sequence>